<gene>
    <name evidence="2" type="primary">tal</name>
    <name type="ordered locus">BPSL1095</name>
</gene>
<name>TAL_BURPS</name>
<protein>
    <recommendedName>
        <fullName evidence="2">Transaldolase</fullName>
        <ecNumber evidence="2">2.2.1.2</ecNumber>
    </recommendedName>
</protein>
<accession>Q63W00</accession>
<dbReference type="EC" id="2.2.1.2" evidence="2"/>
<dbReference type="EMBL" id="BX571965">
    <property type="protein sequence ID" value="CAH35088.1"/>
    <property type="molecule type" value="Genomic_DNA"/>
</dbReference>
<dbReference type="RefSeq" id="WP_004533671.1">
    <property type="nucleotide sequence ID" value="NZ_CP009538.1"/>
</dbReference>
<dbReference type="RefSeq" id="YP_107716.1">
    <property type="nucleotide sequence ID" value="NC_006350.1"/>
</dbReference>
<dbReference type="SMR" id="Q63W00"/>
<dbReference type="STRING" id="272560.BPSL1095"/>
<dbReference type="KEGG" id="bps:BPSL1095"/>
<dbReference type="PATRIC" id="fig|272560.51.peg.462"/>
<dbReference type="eggNOG" id="COG0176">
    <property type="taxonomic scope" value="Bacteria"/>
</dbReference>
<dbReference type="UniPathway" id="UPA00115">
    <property type="reaction ID" value="UER00414"/>
</dbReference>
<dbReference type="Proteomes" id="UP000000605">
    <property type="component" value="Chromosome 1"/>
</dbReference>
<dbReference type="GO" id="GO:0005737">
    <property type="term" value="C:cytoplasm"/>
    <property type="evidence" value="ECO:0007669"/>
    <property type="project" value="UniProtKB-SubCell"/>
</dbReference>
<dbReference type="GO" id="GO:0004801">
    <property type="term" value="F:transaldolase activity"/>
    <property type="evidence" value="ECO:0000250"/>
    <property type="project" value="UniProtKB"/>
</dbReference>
<dbReference type="GO" id="GO:0005975">
    <property type="term" value="P:carbohydrate metabolic process"/>
    <property type="evidence" value="ECO:0007669"/>
    <property type="project" value="InterPro"/>
</dbReference>
<dbReference type="GO" id="GO:0009052">
    <property type="term" value="P:pentose-phosphate shunt, non-oxidative branch"/>
    <property type="evidence" value="ECO:0007669"/>
    <property type="project" value="TreeGrafter"/>
</dbReference>
<dbReference type="CDD" id="cd00957">
    <property type="entry name" value="Transaldolase_TalAB"/>
    <property type="match status" value="1"/>
</dbReference>
<dbReference type="FunFam" id="3.20.20.70:FF:000002">
    <property type="entry name" value="Transaldolase"/>
    <property type="match status" value="1"/>
</dbReference>
<dbReference type="Gene3D" id="3.20.20.70">
    <property type="entry name" value="Aldolase class I"/>
    <property type="match status" value="1"/>
</dbReference>
<dbReference type="HAMAP" id="MF_00492">
    <property type="entry name" value="Transaldolase_1"/>
    <property type="match status" value="1"/>
</dbReference>
<dbReference type="InterPro" id="IPR013785">
    <property type="entry name" value="Aldolase_TIM"/>
</dbReference>
<dbReference type="InterPro" id="IPR001585">
    <property type="entry name" value="TAL/FSA"/>
</dbReference>
<dbReference type="InterPro" id="IPR004730">
    <property type="entry name" value="Transaldolase_1"/>
</dbReference>
<dbReference type="InterPro" id="IPR018225">
    <property type="entry name" value="Transaldolase_AS"/>
</dbReference>
<dbReference type="NCBIfam" id="TIGR00874">
    <property type="entry name" value="talAB"/>
    <property type="match status" value="1"/>
</dbReference>
<dbReference type="PANTHER" id="PTHR10683">
    <property type="entry name" value="TRANSALDOLASE"/>
    <property type="match status" value="1"/>
</dbReference>
<dbReference type="PANTHER" id="PTHR10683:SF18">
    <property type="entry name" value="TRANSALDOLASE"/>
    <property type="match status" value="1"/>
</dbReference>
<dbReference type="Pfam" id="PF00923">
    <property type="entry name" value="TAL_FSA"/>
    <property type="match status" value="1"/>
</dbReference>
<dbReference type="SUPFAM" id="SSF51569">
    <property type="entry name" value="Aldolase"/>
    <property type="match status" value="1"/>
</dbReference>
<dbReference type="PROSITE" id="PS01054">
    <property type="entry name" value="TRANSALDOLASE_1"/>
    <property type="match status" value="1"/>
</dbReference>
<dbReference type="PROSITE" id="PS00958">
    <property type="entry name" value="TRANSALDOLASE_2"/>
    <property type="match status" value="1"/>
</dbReference>
<feature type="chain" id="PRO_0000230946" description="Transaldolase">
    <location>
        <begin position="1"/>
        <end position="317"/>
    </location>
</feature>
<feature type="active site" description="Schiff-base intermediate with substrate" evidence="2">
    <location>
        <position position="126"/>
    </location>
</feature>
<sequence>MTTALDQLKQYTTVVADTGDFQQLAQYKPQDATTNPSLILKAVQKDAYRPILEKTVRDHAGESVGFIIDRLLIAFGTEILKLIPGRVSTEVDARLSFDTQRSIDKGREIIKLYEAAGVGRERVLIKLASTWEGIRAAEVLQREGIRCNMTLLFSLVQAAACAEAGAQLISPFVGRIYDWYKKQKGADWDEAQDGGANDPGVQSVRRIYTYYKHFGYRTEVMGASFRTTSQITELAGCDLLTISPELLQKLHDSTEAVARKLSPDEARDARLERVAIDESSFRFQLNDDAMATEKLAEGIRLFSADAVKLEKMIEALR</sequence>
<comment type="function">
    <text evidence="2">Transaldolase is important for the balance of metabolites in the pentose-phosphate pathway.</text>
</comment>
<comment type="catalytic activity">
    <reaction evidence="2">
        <text>D-sedoheptulose 7-phosphate + D-glyceraldehyde 3-phosphate = D-erythrose 4-phosphate + beta-D-fructose 6-phosphate</text>
        <dbReference type="Rhea" id="RHEA:17053"/>
        <dbReference type="ChEBI" id="CHEBI:16897"/>
        <dbReference type="ChEBI" id="CHEBI:57483"/>
        <dbReference type="ChEBI" id="CHEBI:57634"/>
        <dbReference type="ChEBI" id="CHEBI:59776"/>
        <dbReference type="EC" id="2.2.1.2"/>
    </reaction>
</comment>
<comment type="pathway">
    <text evidence="2">Carbohydrate degradation; pentose phosphate pathway; D-glyceraldehyde 3-phosphate and beta-D-fructose 6-phosphate from D-ribose 5-phosphate and D-xylulose 5-phosphate (non-oxidative stage): step 2/3.</text>
</comment>
<comment type="subunit">
    <text evidence="1">Homodimer.</text>
</comment>
<comment type="subcellular location">
    <subcellularLocation>
        <location evidence="2">Cytoplasm</location>
    </subcellularLocation>
</comment>
<comment type="similarity">
    <text evidence="2">Belongs to the transaldolase family. Type 1 subfamily.</text>
</comment>
<organism>
    <name type="scientific">Burkholderia pseudomallei (strain K96243)</name>
    <dbReference type="NCBI Taxonomy" id="272560"/>
    <lineage>
        <taxon>Bacteria</taxon>
        <taxon>Pseudomonadati</taxon>
        <taxon>Pseudomonadota</taxon>
        <taxon>Betaproteobacteria</taxon>
        <taxon>Burkholderiales</taxon>
        <taxon>Burkholderiaceae</taxon>
        <taxon>Burkholderia</taxon>
        <taxon>pseudomallei group</taxon>
    </lineage>
</organism>
<reference key="1">
    <citation type="journal article" date="2004" name="Proc. Natl. Acad. Sci. U.S.A.">
        <title>Genomic plasticity of the causative agent of melioidosis, Burkholderia pseudomallei.</title>
        <authorList>
            <person name="Holden M.T.G."/>
            <person name="Titball R.W."/>
            <person name="Peacock S.J."/>
            <person name="Cerdeno-Tarraga A.-M."/>
            <person name="Atkins T."/>
            <person name="Crossman L.C."/>
            <person name="Pitt T."/>
            <person name="Churcher C."/>
            <person name="Mungall K.L."/>
            <person name="Bentley S.D."/>
            <person name="Sebaihia M."/>
            <person name="Thomson N.R."/>
            <person name="Bason N."/>
            <person name="Beacham I.R."/>
            <person name="Brooks K."/>
            <person name="Brown K.A."/>
            <person name="Brown N.F."/>
            <person name="Challis G.L."/>
            <person name="Cherevach I."/>
            <person name="Chillingworth T."/>
            <person name="Cronin A."/>
            <person name="Crossett B."/>
            <person name="Davis P."/>
            <person name="DeShazer D."/>
            <person name="Feltwell T."/>
            <person name="Fraser A."/>
            <person name="Hance Z."/>
            <person name="Hauser H."/>
            <person name="Holroyd S."/>
            <person name="Jagels K."/>
            <person name="Keith K.E."/>
            <person name="Maddison M."/>
            <person name="Moule S."/>
            <person name="Price C."/>
            <person name="Quail M.A."/>
            <person name="Rabbinowitsch E."/>
            <person name="Rutherford K."/>
            <person name="Sanders M."/>
            <person name="Simmonds M."/>
            <person name="Songsivilai S."/>
            <person name="Stevens K."/>
            <person name="Tumapa S."/>
            <person name="Vesaratchavest M."/>
            <person name="Whitehead S."/>
            <person name="Yeats C."/>
            <person name="Barrell B.G."/>
            <person name="Oyston P.C.F."/>
            <person name="Parkhill J."/>
        </authorList>
    </citation>
    <scope>NUCLEOTIDE SEQUENCE [LARGE SCALE GENOMIC DNA]</scope>
    <source>
        <strain>K96243</strain>
    </source>
</reference>
<keyword id="KW-0963">Cytoplasm</keyword>
<keyword id="KW-0570">Pentose shunt</keyword>
<keyword id="KW-1185">Reference proteome</keyword>
<keyword id="KW-0704">Schiff base</keyword>
<keyword id="KW-0808">Transferase</keyword>
<evidence type="ECO:0000250" key="1"/>
<evidence type="ECO:0000255" key="2">
    <source>
        <dbReference type="HAMAP-Rule" id="MF_00492"/>
    </source>
</evidence>
<proteinExistence type="inferred from homology"/>